<accession>A8Z4B7</accession>
<reference key="1">
    <citation type="journal article" date="2007" name="BMC Microbiol.">
        <title>Subtle genetic changes enhance virulence of methicillin resistant and sensitive Staphylococcus aureus.</title>
        <authorList>
            <person name="Highlander S.K."/>
            <person name="Hulten K.G."/>
            <person name="Qin X."/>
            <person name="Jiang H."/>
            <person name="Yerrapragada S."/>
            <person name="Mason E.O. Jr."/>
            <person name="Shang Y."/>
            <person name="Williams T.M."/>
            <person name="Fortunov R.M."/>
            <person name="Liu Y."/>
            <person name="Igboeli O."/>
            <person name="Petrosino J."/>
            <person name="Tirumalai M."/>
            <person name="Uzman A."/>
            <person name="Fox G.E."/>
            <person name="Cardenas A.M."/>
            <person name="Muzny D.M."/>
            <person name="Hemphill L."/>
            <person name="Ding Y."/>
            <person name="Dugan S."/>
            <person name="Blyth P.R."/>
            <person name="Buhay C.J."/>
            <person name="Dinh H.H."/>
            <person name="Hawes A.C."/>
            <person name="Holder M."/>
            <person name="Kovar C.L."/>
            <person name="Lee S.L."/>
            <person name="Liu W."/>
            <person name="Nazareth L.V."/>
            <person name="Wang Q."/>
            <person name="Zhou J."/>
            <person name="Kaplan S.L."/>
            <person name="Weinstock G.M."/>
        </authorList>
    </citation>
    <scope>NUCLEOTIDE SEQUENCE [LARGE SCALE GENOMIC DNA]</scope>
    <source>
        <strain>USA300 / TCH1516</strain>
    </source>
</reference>
<name>PRMA_STAAT</name>
<sequence length="312" mass="35513">MNWTELSIIINHEAVELATNILENHGSNGVVIEDSDDLINQPEDKYGEIYALKKEDYPDKGVRLKAYFNEMTYDDKLRQQIKDELLNLDELDQHNVQFSEQIIAETDWENEWKNYFHPFRASKKFTIVPSWETYAKEADEELCIELDPGMAFGTGDHPTTSMCLKAIETYVLPQHSVIDVGTGSGILSIASHLIGVKRIKALDIDEMAVSVAKENFRRNHCETLIEAVPGNLLKDETEKFDIVIANILAHIIDEMIEDAYNTLNEGGYFITSGIIKEKYEGIQSHMERVGFKIISEQHDNGWVCLVGQKVSE</sequence>
<protein>
    <recommendedName>
        <fullName evidence="1">Ribosomal protein L11 methyltransferase</fullName>
        <shortName evidence="1">L11 Mtase</shortName>
        <ecNumber evidence="1">2.1.1.-</ecNumber>
    </recommendedName>
</protein>
<proteinExistence type="inferred from homology"/>
<comment type="function">
    <text evidence="1">Methylates ribosomal protein L11.</text>
</comment>
<comment type="catalytic activity">
    <reaction evidence="1">
        <text>L-lysyl-[protein] + 3 S-adenosyl-L-methionine = N(6),N(6),N(6)-trimethyl-L-lysyl-[protein] + 3 S-adenosyl-L-homocysteine + 3 H(+)</text>
        <dbReference type="Rhea" id="RHEA:54192"/>
        <dbReference type="Rhea" id="RHEA-COMP:9752"/>
        <dbReference type="Rhea" id="RHEA-COMP:13826"/>
        <dbReference type="ChEBI" id="CHEBI:15378"/>
        <dbReference type="ChEBI" id="CHEBI:29969"/>
        <dbReference type="ChEBI" id="CHEBI:57856"/>
        <dbReference type="ChEBI" id="CHEBI:59789"/>
        <dbReference type="ChEBI" id="CHEBI:61961"/>
    </reaction>
</comment>
<comment type="subcellular location">
    <subcellularLocation>
        <location evidence="1">Cytoplasm</location>
    </subcellularLocation>
</comment>
<comment type="similarity">
    <text evidence="1">Belongs to the methyltransferase superfamily. PrmA family.</text>
</comment>
<evidence type="ECO:0000255" key="1">
    <source>
        <dbReference type="HAMAP-Rule" id="MF_00735"/>
    </source>
</evidence>
<dbReference type="EC" id="2.1.1.-" evidence="1"/>
<dbReference type="EMBL" id="CP000730">
    <property type="protein sequence ID" value="ABX29586.1"/>
    <property type="molecule type" value="Genomic_DNA"/>
</dbReference>
<dbReference type="RefSeq" id="WP_001104611.1">
    <property type="nucleotide sequence ID" value="NC_010079.1"/>
</dbReference>
<dbReference type="SMR" id="A8Z4B7"/>
<dbReference type="KEGG" id="sax:USA300HOU_1579"/>
<dbReference type="HOGENOM" id="CLU_049382_0_1_9"/>
<dbReference type="GO" id="GO:0005737">
    <property type="term" value="C:cytoplasm"/>
    <property type="evidence" value="ECO:0007669"/>
    <property type="project" value="UniProtKB-SubCell"/>
</dbReference>
<dbReference type="GO" id="GO:0016279">
    <property type="term" value="F:protein-lysine N-methyltransferase activity"/>
    <property type="evidence" value="ECO:0007669"/>
    <property type="project" value="RHEA"/>
</dbReference>
<dbReference type="GO" id="GO:0032259">
    <property type="term" value="P:methylation"/>
    <property type="evidence" value="ECO:0007669"/>
    <property type="project" value="UniProtKB-KW"/>
</dbReference>
<dbReference type="CDD" id="cd02440">
    <property type="entry name" value="AdoMet_MTases"/>
    <property type="match status" value="1"/>
</dbReference>
<dbReference type="Gene3D" id="3.40.50.150">
    <property type="entry name" value="Vaccinia Virus protein VP39"/>
    <property type="match status" value="1"/>
</dbReference>
<dbReference type="HAMAP" id="MF_00735">
    <property type="entry name" value="Methyltr_PrmA"/>
    <property type="match status" value="1"/>
</dbReference>
<dbReference type="InterPro" id="IPR050078">
    <property type="entry name" value="Ribosomal_L11_MeTrfase_PrmA"/>
</dbReference>
<dbReference type="InterPro" id="IPR004498">
    <property type="entry name" value="Ribosomal_PrmA_MeTrfase"/>
</dbReference>
<dbReference type="InterPro" id="IPR029063">
    <property type="entry name" value="SAM-dependent_MTases_sf"/>
</dbReference>
<dbReference type="NCBIfam" id="TIGR00406">
    <property type="entry name" value="prmA"/>
    <property type="match status" value="1"/>
</dbReference>
<dbReference type="PANTHER" id="PTHR43648">
    <property type="entry name" value="ELECTRON TRANSFER FLAVOPROTEIN BETA SUBUNIT LYSINE METHYLTRANSFERASE"/>
    <property type="match status" value="1"/>
</dbReference>
<dbReference type="PANTHER" id="PTHR43648:SF1">
    <property type="entry name" value="ELECTRON TRANSFER FLAVOPROTEIN BETA SUBUNIT LYSINE METHYLTRANSFERASE"/>
    <property type="match status" value="1"/>
</dbReference>
<dbReference type="Pfam" id="PF06325">
    <property type="entry name" value="PrmA"/>
    <property type="match status" value="1"/>
</dbReference>
<dbReference type="PIRSF" id="PIRSF000401">
    <property type="entry name" value="RPL11_MTase"/>
    <property type="match status" value="1"/>
</dbReference>
<dbReference type="SUPFAM" id="SSF53335">
    <property type="entry name" value="S-adenosyl-L-methionine-dependent methyltransferases"/>
    <property type="match status" value="1"/>
</dbReference>
<keyword id="KW-0963">Cytoplasm</keyword>
<keyword id="KW-0489">Methyltransferase</keyword>
<keyword id="KW-0949">S-adenosyl-L-methionine</keyword>
<keyword id="KW-0808">Transferase</keyword>
<feature type="chain" id="PRO_1000083365" description="Ribosomal protein L11 methyltransferase">
    <location>
        <begin position="1"/>
        <end position="312"/>
    </location>
</feature>
<feature type="binding site" evidence="1">
    <location>
        <position position="160"/>
    </location>
    <ligand>
        <name>S-adenosyl-L-methionine</name>
        <dbReference type="ChEBI" id="CHEBI:59789"/>
    </ligand>
</feature>
<feature type="binding site" evidence="1">
    <location>
        <position position="181"/>
    </location>
    <ligand>
        <name>S-adenosyl-L-methionine</name>
        <dbReference type="ChEBI" id="CHEBI:59789"/>
    </ligand>
</feature>
<feature type="binding site" evidence="1">
    <location>
        <position position="203"/>
    </location>
    <ligand>
        <name>S-adenosyl-L-methionine</name>
        <dbReference type="ChEBI" id="CHEBI:59789"/>
    </ligand>
</feature>
<feature type="binding site" evidence="1">
    <location>
        <position position="246"/>
    </location>
    <ligand>
        <name>S-adenosyl-L-methionine</name>
        <dbReference type="ChEBI" id="CHEBI:59789"/>
    </ligand>
</feature>
<gene>
    <name evidence="1" type="primary">prmA</name>
    <name type="ordered locus">USA300HOU_1579</name>
</gene>
<organism>
    <name type="scientific">Staphylococcus aureus (strain USA300 / TCH1516)</name>
    <dbReference type="NCBI Taxonomy" id="451516"/>
    <lineage>
        <taxon>Bacteria</taxon>
        <taxon>Bacillati</taxon>
        <taxon>Bacillota</taxon>
        <taxon>Bacilli</taxon>
        <taxon>Bacillales</taxon>
        <taxon>Staphylococcaceae</taxon>
        <taxon>Staphylococcus</taxon>
    </lineage>
</organism>